<feature type="chain" id="PRO_0000344225" description="Ribonuclease kappa-A">
    <location>
        <begin position="1"/>
        <end position="101"/>
    </location>
</feature>
<feature type="transmembrane region" description="Helical" evidence="2">
    <location>
        <begin position="13"/>
        <end position="33"/>
    </location>
</feature>
<feature type="transmembrane region" description="Helical" evidence="2">
    <location>
        <begin position="68"/>
        <end position="88"/>
    </location>
</feature>
<proteinExistence type="inferred from homology"/>
<reference key="1">
    <citation type="submission" date="2006-12" db="EMBL/GenBank/DDBJ databases">
        <authorList>
            <consortium name="NIH - Xenopus Gene Collection (XGC) project"/>
        </authorList>
    </citation>
    <scope>NUCLEOTIDE SEQUENCE [LARGE SCALE MRNA]</scope>
    <source>
        <tissue>Spleen</tissue>
    </source>
</reference>
<comment type="function">
    <text evidence="1">Endoribonuclease which preferentially cleaves ApU and ApG phosphodiester bonds.</text>
</comment>
<comment type="subcellular location">
    <subcellularLocation>
        <location evidence="3">Membrane</location>
        <topology evidence="3">Multi-pass membrane protein</topology>
    </subcellularLocation>
</comment>
<comment type="similarity">
    <text evidence="3">Belongs to the RNase K family.</text>
</comment>
<sequence length="101" mass="11400">MVSLLCCGPKLAACGIVISVWGVIMLILLGVFFNVHSAVLIEDVPFTEEDIFEDPNPPAKMYRLYEQVSYNCFIAAAIYIVLGGFSFCQVRLNKRKEYMVR</sequence>
<protein>
    <recommendedName>
        <fullName>Ribonuclease kappa-A</fullName>
        <shortName>RNase K-A</shortName>
        <shortName>RNase kappa-A</shortName>
        <ecNumber>3.1.-.-</ecNumber>
    </recommendedName>
</protein>
<dbReference type="EC" id="3.1.-.-"/>
<dbReference type="EMBL" id="BC129756">
    <property type="protein sequence ID" value="AAI29757.1"/>
    <property type="molecule type" value="mRNA"/>
</dbReference>
<dbReference type="RefSeq" id="NP_001091376.1">
    <property type="nucleotide sequence ID" value="NM_001097907.1"/>
</dbReference>
<dbReference type="SMR" id="A2VDC7"/>
<dbReference type="DNASU" id="100037220"/>
<dbReference type="GeneID" id="100037220"/>
<dbReference type="KEGG" id="xla:100037220"/>
<dbReference type="AGR" id="Xenbase:XB-GENE-6254981"/>
<dbReference type="CTD" id="100037220"/>
<dbReference type="Xenbase" id="XB-GENE-6254981">
    <property type="gene designation" value="rnasek.S"/>
</dbReference>
<dbReference type="OrthoDB" id="67317at2759"/>
<dbReference type="Proteomes" id="UP000186698">
    <property type="component" value="Chromosome 3S"/>
</dbReference>
<dbReference type="Bgee" id="100037220">
    <property type="expression patterns" value="Expressed in internal ear and 20 other cell types or tissues"/>
</dbReference>
<dbReference type="GO" id="GO:0016020">
    <property type="term" value="C:membrane"/>
    <property type="evidence" value="ECO:0007669"/>
    <property type="project" value="UniProtKB-SubCell"/>
</dbReference>
<dbReference type="GO" id="GO:0004521">
    <property type="term" value="F:RNA endonuclease activity"/>
    <property type="evidence" value="ECO:0000250"/>
    <property type="project" value="UniProtKB"/>
</dbReference>
<dbReference type="InterPro" id="IPR056552">
    <property type="entry name" value="Ribonucl_Kappa"/>
</dbReference>
<dbReference type="InterPro" id="IPR026770">
    <property type="entry name" value="RNase_K"/>
</dbReference>
<dbReference type="PANTHER" id="PTHR31733">
    <property type="entry name" value="RIBONUCLEASE KAPPA"/>
    <property type="match status" value="1"/>
</dbReference>
<dbReference type="Pfam" id="PF23489">
    <property type="entry name" value="V-ATPase_su_f"/>
    <property type="match status" value="1"/>
</dbReference>
<organism>
    <name type="scientific">Xenopus laevis</name>
    <name type="common">African clawed frog</name>
    <dbReference type="NCBI Taxonomy" id="8355"/>
    <lineage>
        <taxon>Eukaryota</taxon>
        <taxon>Metazoa</taxon>
        <taxon>Chordata</taxon>
        <taxon>Craniata</taxon>
        <taxon>Vertebrata</taxon>
        <taxon>Euteleostomi</taxon>
        <taxon>Amphibia</taxon>
        <taxon>Batrachia</taxon>
        <taxon>Anura</taxon>
        <taxon>Pipoidea</taxon>
        <taxon>Pipidae</taxon>
        <taxon>Xenopodinae</taxon>
        <taxon>Xenopus</taxon>
        <taxon>Xenopus</taxon>
    </lineage>
</organism>
<name>RNKA_XENLA</name>
<keyword id="KW-0255">Endonuclease</keyword>
<keyword id="KW-0378">Hydrolase</keyword>
<keyword id="KW-0472">Membrane</keyword>
<keyword id="KW-0540">Nuclease</keyword>
<keyword id="KW-1185">Reference proteome</keyword>
<keyword id="KW-0812">Transmembrane</keyword>
<keyword id="KW-1133">Transmembrane helix</keyword>
<accession>A2VDC7</accession>
<gene>
    <name type="primary">rnasek-a</name>
</gene>
<evidence type="ECO:0000250" key="1"/>
<evidence type="ECO:0000255" key="2"/>
<evidence type="ECO:0000305" key="3"/>